<organism>
    <name type="scientific">Xenopus tropicalis</name>
    <name type="common">Western clawed frog</name>
    <name type="synonym">Silurana tropicalis</name>
    <dbReference type="NCBI Taxonomy" id="8364"/>
    <lineage>
        <taxon>Eukaryota</taxon>
        <taxon>Metazoa</taxon>
        <taxon>Chordata</taxon>
        <taxon>Craniata</taxon>
        <taxon>Vertebrata</taxon>
        <taxon>Euteleostomi</taxon>
        <taxon>Amphibia</taxon>
        <taxon>Batrachia</taxon>
        <taxon>Anura</taxon>
        <taxon>Pipoidea</taxon>
        <taxon>Pipidae</taxon>
        <taxon>Xenopodinae</taxon>
        <taxon>Xenopus</taxon>
        <taxon>Silurana</taxon>
    </lineage>
</organism>
<sequence>MADTEEENLQSQIDEVEALTSIYGDEWCVIDEAERIFCITVSDSSNKPTWTLCLQVILPAEYPASSPPLYQLNAPWLRGEDRLTLANNLEEIYLQNLGENILYQWVEKIREFLLGKSQTSDPGPCLKSTSEETDVDDDCEIPAEELNESFKNSMLFGLNDSSGVEEIPPIIHGETITDRRSTFQAHLAPVVSPYQVKLILNKLYENKKIATATHNIYAYRIYIKERNSFIQDCEDDGETAAGKRMLHLMQILDARDVMVVVSRWYGGILLGPDRFKHINNCARNILMEHKYCSAGEESSKQTAKSKKVGKECKKKADH</sequence>
<feature type="chain" id="PRO_0000330856" description="Protein IMPACT-A">
    <location>
        <begin position="1"/>
        <end position="318"/>
    </location>
</feature>
<feature type="domain" description="RWD" evidence="2">
    <location>
        <begin position="14"/>
        <end position="116"/>
    </location>
</feature>
<feature type="region of interest" description="Disordered" evidence="3">
    <location>
        <begin position="296"/>
        <end position="318"/>
    </location>
</feature>
<feature type="compositionally biased region" description="Basic and acidic residues" evidence="3">
    <location>
        <begin position="308"/>
        <end position="318"/>
    </location>
</feature>
<accession>Q5M8G6</accession>
<comment type="function">
    <text evidence="1">Translational regulator that ensures constant high levels of translation upon a variety of stress conditions, such as amino acid starvation, UV-C irradiation, proteasome inhibitor treatment and glucose deprivation. Plays a role as a negative regulator of the EIF2AK4/GCN2 kinase activity; impairs GCN1-mediated EIF2AK4/GCN2 activation, and hence EIF2AK4/GCN2-mediated eIF-2-alpha phosphorylation and subsequent down-regulation of protein synthesis. Plays a role in differentiation of neuronal cells by stimulating neurite outgrowth.</text>
</comment>
<comment type="subunit">
    <text evidence="1">Interacts with GCN1; prevents the interaction of GCN1 with EIF2AK4/GCN2 and inhibits EIF2AK4/GCN2 kinase activity. Interaction with RPL39; this interaction occurs in a GCN1-independent manner. Associates with ribosomes; this interaction occurs in a GCN1-independent manner. Associates with actin; this interaction occurs in a GCN1-independent manner.</text>
</comment>
<comment type="subcellular location">
    <subcellularLocation>
        <location evidence="1">Cytoplasm</location>
    </subcellularLocation>
</comment>
<comment type="similarity">
    <text evidence="4">Belongs to the IMPACT family.</text>
</comment>
<proteinExistence type="evidence at transcript level"/>
<reference key="1">
    <citation type="submission" date="2006-10" db="EMBL/GenBank/DDBJ databases">
        <authorList>
            <consortium name="Sanger Xenopus tropicalis EST/cDNA project"/>
        </authorList>
    </citation>
    <scope>NUCLEOTIDE SEQUENCE [LARGE SCALE MRNA]</scope>
    <source>
        <tissue>Neurula</tissue>
    </source>
</reference>
<reference key="2">
    <citation type="submission" date="2004-12" db="EMBL/GenBank/DDBJ databases">
        <authorList>
            <consortium name="NIH - Xenopus Gene Collection (XGC) project"/>
        </authorList>
    </citation>
    <scope>NUCLEOTIDE SEQUENCE [LARGE SCALE MRNA]</scope>
</reference>
<dbReference type="EMBL" id="CR760285">
    <property type="protein sequence ID" value="CAJ83093.1"/>
    <property type="molecule type" value="mRNA"/>
</dbReference>
<dbReference type="EMBL" id="BC088032">
    <property type="protein sequence ID" value="AAH88032.1"/>
    <property type="molecule type" value="mRNA"/>
</dbReference>
<dbReference type="RefSeq" id="NP_001011308.1">
    <property type="nucleotide sequence ID" value="NM_001011308.1"/>
</dbReference>
<dbReference type="SMR" id="Q5M8G6"/>
<dbReference type="FunCoup" id="Q5M8G6">
    <property type="interactions" value="585"/>
</dbReference>
<dbReference type="STRING" id="8364.ENSXETP00000052673"/>
<dbReference type="PaxDb" id="8364-ENSXETP00000033381"/>
<dbReference type="DNASU" id="496763"/>
<dbReference type="GeneID" id="496763"/>
<dbReference type="KEGG" id="xtr:496763"/>
<dbReference type="AGR" id="Xenbase:XB-GENE-947990"/>
<dbReference type="CTD" id="55364"/>
<dbReference type="Xenbase" id="XB-GENE-947990">
    <property type="gene designation" value="impact"/>
</dbReference>
<dbReference type="eggNOG" id="KOG3299">
    <property type="taxonomic scope" value="Eukaryota"/>
</dbReference>
<dbReference type="InParanoid" id="Q5M8G6"/>
<dbReference type="OrthoDB" id="69641at2759"/>
<dbReference type="Proteomes" id="UP000008143">
    <property type="component" value="Chromosome 6"/>
</dbReference>
<dbReference type="GO" id="GO:0005737">
    <property type="term" value="C:cytoplasm"/>
    <property type="evidence" value="ECO:0000250"/>
    <property type="project" value="UniProtKB"/>
</dbReference>
<dbReference type="GO" id="GO:0140311">
    <property type="term" value="F:protein sequestering activity"/>
    <property type="evidence" value="ECO:0000250"/>
    <property type="project" value="UniProtKB"/>
</dbReference>
<dbReference type="GO" id="GO:0034198">
    <property type="term" value="P:cellular response to amino acid starvation"/>
    <property type="evidence" value="ECO:0000250"/>
    <property type="project" value="UniProtKB"/>
</dbReference>
<dbReference type="GO" id="GO:0140469">
    <property type="term" value="P:GCN2-mediated signaling"/>
    <property type="evidence" value="ECO:0000250"/>
    <property type="project" value="UniProtKB"/>
</dbReference>
<dbReference type="GO" id="GO:0035556">
    <property type="term" value="P:intracellular signal transduction"/>
    <property type="evidence" value="ECO:0000250"/>
    <property type="project" value="UniProtKB"/>
</dbReference>
<dbReference type="GO" id="GO:0000122">
    <property type="term" value="P:negative regulation of transcription by RNA polymerase II"/>
    <property type="evidence" value="ECO:0000250"/>
    <property type="project" value="UniProtKB"/>
</dbReference>
<dbReference type="GO" id="GO:1990138">
    <property type="term" value="P:neuron projection extension"/>
    <property type="evidence" value="ECO:0000250"/>
    <property type="project" value="UniProtKB"/>
</dbReference>
<dbReference type="GO" id="GO:0045666">
    <property type="term" value="P:positive regulation of neuron differentiation"/>
    <property type="evidence" value="ECO:0000250"/>
    <property type="project" value="UniProtKB"/>
</dbReference>
<dbReference type="GO" id="GO:1990611">
    <property type="term" value="P:regulation of cytoplasmic translational initiation in response to stress"/>
    <property type="evidence" value="ECO:0000250"/>
    <property type="project" value="UniProtKB"/>
</dbReference>
<dbReference type="CDD" id="cd23821">
    <property type="entry name" value="RWD_IMPACT"/>
    <property type="match status" value="1"/>
</dbReference>
<dbReference type="FunFam" id="3.10.110.10:FF:000066">
    <property type="entry name" value="IMPACT isoform 1"/>
    <property type="match status" value="1"/>
</dbReference>
<dbReference type="FunFam" id="3.30.230.30:FF:000001">
    <property type="entry name" value="IMPACT isoform 1"/>
    <property type="match status" value="1"/>
</dbReference>
<dbReference type="Gene3D" id="3.30.230.30">
    <property type="entry name" value="Impact, N-terminal domain"/>
    <property type="match status" value="1"/>
</dbReference>
<dbReference type="Gene3D" id="3.10.110.10">
    <property type="entry name" value="Ubiquitin Conjugating Enzyme"/>
    <property type="match status" value="1"/>
</dbReference>
<dbReference type="InterPro" id="IPR023582">
    <property type="entry name" value="Impact"/>
</dbReference>
<dbReference type="InterPro" id="IPR001498">
    <property type="entry name" value="Impact_N"/>
</dbReference>
<dbReference type="InterPro" id="IPR036956">
    <property type="entry name" value="Impact_N_sf"/>
</dbReference>
<dbReference type="InterPro" id="IPR020568">
    <property type="entry name" value="Ribosomal_Su5_D2-typ_SF"/>
</dbReference>
<dbReference type="InterPro" id="IPR006575">
    <property type="entry name" value="RWD_dom"/>
</dbReference>
<dbReference type="InterPro" id="IPR016135">
    <property type="entry name" value="UBQ-conjugating_enzyme/RWD"/>
</dbReference>
<dbReference type="PANTHER" id="PTHR16301">
    <property type="entry name" value="IMPACT-RELATED"/>
    <property type="match status" value="1"/>
</dbReference>
<dbReference type="PANTHER" id="PTHR16301:SF27">
    <property type="entry name" value="PROTEIN IMPACT"/>
    <property type="match status" value="1"/>
</dbReference>
<dbReference type="Pfam" id="PF05773">
    <property type="entry name" value="RWD"/>
    <property type="match status" value="1"/>
</dbReference>
<dbReference type="Pfam" id="PF01205">
    <property type="entry name" value="UPF0029"/>
    <property type="match status" value="1"/>
</dbReference>
<dbReference type="SMART" id="SM00591">
    <property type="entry name" value="RWD"/>
    <property type="match status" value="1"/>
</dbReference>
<dbReference type="SUPFAM" id="SSF54211">
    <property type="entry name" value="Ribosomal protein S5 domain 2-like"/>
    <property type="match status" value="1"/>
</dbReference>
<dbReference type="SUPFAM" id="SSF54495">
    <property type="entry name" value="UBC-like"/>
    <property type="match status" value="1"/>
</dbReference>
<dbReference type="PROSITE" id="PS50908">
    <property type="entry name" value="RWD"/>
    <property type="match status" value="1"/>
</dbReference>
<keyword id="KW-0963">Cytoplasm</keyword>
<keyword id="KW-0221">Differentiation</keyword>
<keyword id="KW-0524">Neurogenesis</keyword>
<keyword id="KW-1185">Reference proteome</keyword>
<keyword id="KW-0678">Repressor</keyword>
<keyword id="KW-0346">Stress response</keyword>
<keyword id="KW-0810">Translation regulation</keyword>
<gene>
    <name type="primary">impact-A</name>
    <name type="ORF">TNeu063h23.1</name>
</gene>
<evidence type="ECO:0000250" key="1">
    <source>
        <dbReference type="UniProtKB" id="O55091"/>
    </source>
</evidence>
<evidence type="ECO:0000255" key="2">
    <source>
        <dbReference type="PROSITE-ProRule" id="PRU00179"/>
    </source>
</evidence>
<evidence type="ECO:0000256" key="3">
    <source>
        <dbReference type="SAM" id="MobiDB-lite"/>
    </source>
</evidence>
<evidence type="ECO:0000305" key="4"/>
<name>IMPTA_XENTR</name>
<protein>
    <recommendedName>
        <fullName>Protein IMPACT-A</fullName>
    </recommendedName>
    <alternativeName>
        <fullName>Imprinted and ancient gene protein homolog A</fullName>
    </alternativeName>
</protein>